<organism>
    <name type="scientific">Homo sapiens</name>
    <name type="common">Human</name>
    <dbReference type="NCBI Taxonomy" id="9606"/>
    <lineage>
        <taxon>Eukaryota</taxon>
        <taxon>Metazoa</taxon>
        <taxon>Chordata</taxon>
        <taxon>Craniata</taxon>
        <taxon>Vertebrata</taxon>
        <taxon>Euteleostomi</taxon>
        <taxon>Mammalia</taxon>
        <taxon>Eutheria</taxon>
        <taxon>Euarchontoglires</taxon>
        <taxon>Primates</taxon>
        <taxon>Haplorrhini</taxon>
        <taxon>Catarrhini</taxon>
        <taxon>Hominidae</taxon>
        <taxon>Homo</taxon>
    </lineage>
</organism>
<evidence type="ECO:0000255" key="1">
    <source>
        <dbReference type="HAMAP-Rule" id="MF_03111"/>
    </source>
</evidence>
<evidence type="ECO:0000269" key="2">
    <source>
    </source>
</evidence>
<evidence type="ECO:0000269" key="3">
    <source>
    </source>
</evidence>
<evidence type="ECO:0000269" key="4">
    <source>
    </source>
</evidence>
<evidence type="ECO:0000269" key="5">
    <source>
    </source>
</evidence>
<evidence type="ECO:0000269" key="6">
    <source>
    </source>
</evidence>
<evidence type="ECO:0000269" key="7">
    <source>
    </source>
</evidence>
<evidence type="ECO:0000269" key="8">
    <source>
    </source>
</evidence>
<evidence type="ECO:0000269" key="9">
    <source>
    </source>
</evidence>
<evidence type="ECO:0000269" key="10">
    <source>
    </source>
</evidence>
<evidence type="ECO:0000269" key="11">
    <source>
    </source>
</evidence>
<evidence type="ECO:0000269" key="12">
    <source>
    </source>
</evidence>
<evidence type="ECO:0000269" key="13">
    <source>
    </source>
</evidence>
<evidence type="ECO:0000269" key="14">
    <source>
    </source>
</evidence>
<evidence type="ECO:0000269" key="15">
    <source>
    </source>
</evidence>
<evidence type="ECO:0000269" key="16">
    <source>
    </source>
</evidence>
<evidence type="ECO:0000269" key="17">
    <source>
    </source>
</evidence>
<evidence type="ECO:0000269" key="18">
    <source ref="5"/>
</evidence>
<evidence type="ECO:0000303" key="19">
    <source>
    </source>
</evidence>
<evidence type="ECO:0000303" key="20">
    <source>
    </source>
</evidence>
<evidence type="ECO:0000305" key="21"/>
<evidence type="ECO:0000305" key="22">
    <source>
    </source>
</evidence>
<evidence type="ECO:0007744" key="23">
    <source>
    </source>
</evidence>
<dbReference type="EC" id="4.1.1.130" evidence="16 22"/>
<dbReference type="EMBL" id="EU216419">
    <property type="protein sequence ID" value="ABW91141.1"/>
    <property type="molecule type" value="mRNA"/>
</dbReference>
<dbReference type="EMBL" id="EU216420">
    <property type="protein sequence ID" value="ABW91142.1"/>
    <property type="molecule type" value="mRNA"/>
</dbReference>
<dbReference type="EMBL" id="EU216421">
    <property type="protein sequence ID" value="ABW91143.1"/>
    <property type="molecule type" value="mRNA"/>
</dbReference>
<dbReference type="EMBL" id="EU216422">
    <property type="protein sequence ID" value="ABW91144.1"/>
    <property type="molecule type" value="mRNA"/>
</dbReference>
<dbReference type="EMBL" id="EU216423">
    <property type="protein sequence ID" value="ABW91145.1"/>
    <property type="molecule type" value="mRNA"/>
</dbReference>
<dbReference type="EMBL" id="AF151850">
    <property type="protein sequence ID" value="AAD34087.1"/>
    <property type="molecule type" value="mRNA"/>
</dbReference>
<dbReference type="EMBL" id="AK313650">
    <property type="protein sequence ID" value="BAG36405.1"/>
    <property type="molecule type" value="mRNA"/>
</dbReference>
<dbReference type="EMBL" id="AL359091">
    <property type="status" value="NOT_ANNOTATED_CDS"/>
    <property type="molecule type" value="Genomic_DNA"/>
</dbReference>
<dbReference type="EMBL" id="CH471090">
    <property type="protein sequence ID" value="EAW87776.1"/>
    <property type="molecule type" value="Genomic_DNA"/>
</dbReference>
<dbReference type="EMBL" id="BC011895">
    <property type="protein sequence ID" value="AAH11895.1"/>
    <property type="molecule type" value="mRNA"/>
</dbReference>
<dbReference type="CCDS" id="CCDS6898.1">
    <molecule id="Q9Y3A0-1"/>
</dbReference>
<dbReference type="RefSeq" id="NP_057119.3">
    <molecule id="Q9Y3A0-1"/>
    <property type="nucleotide sequence ID" value="NM_016035.5"/>
</dbReference>
<dbReference type="SMR" id="Q9Y3A0"/>
<dbReference type="BioGRID" id="119305">
    <property type="interactions" value="43"/>
</dbReference>
<dbReference type="ComplexPortal" id="CPX-3642">
    <property type="entry name" value="CoQ biosynthetic complex"/>
</dbReference>
<dbReference type="FunCoup" id="Q9Y3A0">
    <property type="interactions" value="288"/>
</dbReference>
<dbReference type="IntAct" id="Q9Y3A0">
    <property type="interactions" value="32"/>
</dbReference>
<dbReference type="STRING" id="9606.ENSP00000300452"/>
<dbReference type="iPTMnet" id="Q9Y3A0"/>
<dbReference type="PhosphoSitePlus" id="Q9Y3A0"/>
<dbReference type="BioMuta" id="COQ4"/>
<dbReference type="DMDM" id="226694194"/>
<dbReference type="jPOST" id="Q9Y3A0"/>
<dbReference type="MassIVE" id="Q9Y3A0"/>
<dbReference type="PaxDb" id="9606-ENSP00000300452"/>
<dbReference type="PeptideAtlas" id="Q9Y3A0"/>
<dbReference type="ProteomicsDB" id="85990">
    <molecule id="Q9Y3A0-1"/>
</dbReference>
<dbReference type="ProteomicsDB" id="85991">
    <molecule id="Q9Y3A0-2"/>
</dbReference>
<dbReference type="Pumba" id="Q9Y3A0"/>
<dbReference type="Antibodypedia" id="31095">
    <property type="antibodies" value="49 antibodies from 13 providers"/>
</dbReference>
<dbReference type="DNASU" id="51117"/>
<dbReference type="Ensembl" id="ENST00000300452.8">
    <molecule id="Q9Y3A0-1"/>
    <property type="protein sequence ID" value="ENSP00000300452.3"/>
    <property type="gene ID" value="ENSG00000167113.11"/>
</dbReference>
<dbReference type="GeneID" id="51117"/>
<dbReference type="KEGG" id="hsa:51117"/>
<dbReference type="MANE-Select" id="ENST00000300452.8">
    <property type="protein sequence ID" value="ENSP00000300452.3"/>
    <property type="RefSeq nucleotide sequence ID" value="NM_016035.5"/>
    <property type="RefSeq protein sequence ID" value="NP_057119.3"/>
</dbReference>
<dbReference type="UCSC" id="uc004bur.5">
    <molecule id="Q9Y3A0-1"/>
    <property type="organism name" value="human"/>
</dbReference>
<dbReference type="AGR" id="HGNC:19693"/>
<dbReference type="CTD" id="51117"/>
<dbReference type="DisGeNET" id="51117"/>
<dbReference type="GeneCards" id="COQ4"/>
<dbReference type="GeneReviews" id="COQ4"/>
<dbReference type="HGNC" id="HGNC:19693">
    <property type="gene designation" value="COQ4"/>
</dbReference>
<dbReference type="HPA" id="ENSG00000167113">
    <property type="expression patterns" value="Low tissue specificity"/>
</dbReference>
<dbReference type="MalaCards" id="COQ4"/>
<dbReference type="MIM" id="612898">
    <property type="type" value="gene"/>
</dbReference>
<dbReference type="MIM" id="616276">
    <property type="type" value="phenotype"/>
</dbReference>
<dbReference type="MIM" id="620666">
    <property type="type" value="phenotype"/>
</dbReference>
<dbReference type="neXtProt" id="NX_Q9Y3A0"/>
<dbReference type="OpenTargets" id="ENSG00000167113"/>
<dbReference type="Orphanet" id="457185">
    <property type="disease" value="Neonatal encephalomyopathy-cardiomyopathy-respiratory distress syndrome"/>
</dbReference>
<dbReference type="PharmGKB" id="PA134957951"/>
<dbReference type="VEuPathDB" id="HostDB:ENSG00000167113"/>
<dbReference type="eggNOG" id="KOG3244">
    <property type="taxonomic scope" value="Eukaryota"/>
</dbReference>
<dbReference type="GeneTree" id="ENSGT00390000003828"/>
<dbReference type="HOGENOM" id="CLU_061241_1_1_1"/>
<dbReference type="InParanoid" id="Q9Y3A0"/>
<dbReference type="OMA" id="YYERHFH"/>
<dbReference type="OrthoDB" id="4249at2759"/>
<dbReference type="PAN-GO" id="Q9Y3A0">
    <property type="GO annotations" value="1 GO annotation based on evolutionary models"/>
</dbReference>
<dbReference type="PhylomeDB" id="Q9Y3A0"/>
<dbReference type="TreeFam" id="TF314625"/>
<dbReference type="PathwayCommons" id="Q9Y3A0"/>
<dbReference type="Reactome" id="R-HSA-2142789">
    <property type="pathway name" value="Ubiquinol biosynthesis"/>
</dbReference>
<dbReference type="SignaLink" id="Q9Y3A0"/>
<dbReference type="UniPathway" id="UPA00232"/>
<dbReference type="BioGRID-ORCS" id="51117">
    <property type="hits" value="463 hits in 1069 CRISPR screens"/>
</dbReference>
<dbReference type="ChiTaRS" id="COQ4">
    <property type="organism name" value="human"/>
</dbReference>
<dbReference type="GeneWiki" id="COQ4"/>
<dbReference type="GenomeRNAi" id="51117"/>
<dbReference type="Pharos" id="Q9Y3A0">
    <property type="development level" value="Tbio"/>
</dbReference>
<dbReference type="PRO" id="PR:Q9Y3A0"/>
<dbReference type="Proteomes" id="UP000005640">
    <property type="component" value="Chromosome 9"/>
</dbReference>
<dbReference type="RNAct" id="Q9Y3A0">
    <property type="molecule type" value="protein"/>
</dbReference>
<dbReference type="Bgee" id="ENSG00000167113">
    <property type="expression patterns" value="Expressed in right uterine tube and 165 other cell types or tissues"/>
</dbReference>
<dbReference type="ExpressionAtlas" id="Q9Y3A0">
    <property type="expression patterns" value="baseline and differential"/>
</dbReference>
<dbReference type="GO" id="GO:0031314">
    <property type="term" value="C:extrinsic component of mitochondrial inner membrane"/>
    <property type="evidence" value="ECO:0007669"/>
    <property type="project" value="UniProtKB-UniRule"/>
</dbReference>
<dbReference type="GO" id="GO:0005743">
    <property type="term" value="C:mitochondrial inner membrane"/>
    <property type="evidence" value="ECO:0000314"/>
    <property type="project" value="ComplexPortal"/>
</dbReference>
<dbReference type="GO" id="GO:0005739">
    <property type="term" value="C:mitochondrion"/>
    <property type="evidence" value="ECO:0000314"/>
    <property type="project" value="LIFEdb"/>
</dbReference>
<dbReference type="GO" id="GO:0032991">
    <property type="term" value="C:protein-containing complex"/>
    <property type="evidence" value="ECO:0000314"/>
    <property type="project" value="UniProtKB"/>
</dbReference>
<dbReference type="GO" id="GO:0110142">
    <property type="term" value="C:ubiquinone biosynthesis complex"/>
    <property type="evidence" value="ECO:0000353"/>
    <property type="project" value="ComplexPortal"/>
</dbReference>
<dbReference type="GO" id="GO:0120539">
    <property type="term" value="F:4-hydroxy-3-methoxy-5-polyprenylbenzoate decarboxylase activity"/>
    <property type="evidence" value="ECO:0000314"/>
    <property type="project" value="UniProtKB"/>
</dbReference>
<dbReference type="GO" id="GO:0006744">
    <property type="term" value="P:ubiquinone biosynthetic process"/>
    <property type="evidence" value="ECO:0000314"/>
    <property type="project" value="UniProtKB"/>
</dbReference>
<dbReference type="HAMAP" id="MF_03111">
    <property type="entry name" value="Coq4"/>
    <property type="match status" value="1"/>
</dbReference>
<dbReference type="InterPro" id="IPR007715">
    <property type="entry name" value="Coq4"/>
</dbReference>
<dbReference type="InterPro" id="IPR027540">
    <property type="entry name" value="Coq4_euk"/>
</dbReference>
<dbReference type="PANTHER" id="PTHR12922">
    <property type="entry name" value="UBIQUINONE BIOSYNTHESIS PROTEIN"/>
    <property type="match status" value="1"/>
</dbReference>
<dbReference type="PANTHER" id="PTHR12922:SF7">
    <property type="entry name" value="UBIQUINONE BIOSYNTHESIS PROTEIN COQ4 HOMOLOG, MITOCHONDRIAL"/>
    <property type="match status" value="1"/>
</dbReference>
<dbReference type="Pfam" id="PF05019">
    <property type="entry name" value="Coq4"/>
    <property type="match status" value="1"/>
</dbReference>
<comment type="function">
    <text evidence="1 16 17">Lyase that catalyzes the C1-decarboxylation of 4-hydroxy-3-methoxy-5-(all-trans-decaprenyl)benzoic acid into 2-methoxy-6-(all-trans-decaprenyl)phenol during ubiquinone biosynthesis.</text>
</comment>
<comment type="catalytic activity">
    <reaction evidence="1 16 22">
        <text>4-hydroxy-3-methoxy-5-(all-trans-decaprenyl)benzoate + H(+) = 2-methoxy-6-(all-trans-decaprenyl)phenol + CO2</text>
        <dbReference type="Rhea" id="RHEA:81275"/>
        <dbReference type="ChEBI" id="CHEBI:15378"/>
        <dbReference type="ChEBI" id="CHEBI:16526"/>
        <dbReference type="ChEBI" id="CHEBI:50774"/>
        <dbReference type="ChEBI" id="CHEBI:62796"/>
        <dbReference type="EC" id="4.1.1.130"/>
    </reaction>
</comment>
<comment type="cofactor">
    <cofactor evidence="1 16 17">
        <name>Zn(2+)</name>
        <dbReference type="ChEBI" id="CHEBI:29105"/>
    </cofactor>
</comment>
<comment type="pathway">
    <text evidence="1 5 9 15 16 17">Cofactor biosynthesis; ubiquinone biosynthesis.</text>
</comment>
<comment type="subunit">
    <text evidence="1 8">Component of a multi-subunit COQ enzyme complex, composed of at least COQ3, COQ4, COQ5, COQ6, COQ7 and COQ9.</text>
</comment>
<comment type="interaction">
    <interactant intactId="EBI-12284865">
        <id>Q9Y3A0</id>
    </interactant>
    <interactant intactId="EBI-10897372">
        <id>Q9NZJ6</id>
        <label>COQ3</label>
    </interactant>
    <organismsDiffer>false</organismsDiffer>
    <experiments>4</experiments>
</comment>
<comment type="interaction">
    <interactant intactId="EBI-12284865">
        <id>Q9Y3A0</id>
    </interactant>
    <interactant intactId="EBI-12577722">
        <id>Q5HYK3</id>
        <label>COQ5</label>
    </interactant>
    <organismsDiffer>false</organismsDiffer>
    <experiments>6</experiments>
</comment>
<comment type="interaction">
    <interactant intactId="EBI-12284865">
        <id>Q9Y3A0</id>
    </interactant>
    <interactant intactId="EBI-718148">
        <id>Q9Y2Z9</id>
        <label>COQ6</label>
    </interactant>
    <organismsDiffer>false</organismsDiffer>
    <experiments>3</experiments>
</comment>
<comment type="interaction">
    <interactant intactId="EBI-12284865">
        <id>Q9Y3A0</id>
    </interactant>
    <interactant intactId="EBI-11017131">
        <id>Q99807</id>
        <label>COQ7</label>
    </interactant>
    <organismsDiffer>false</organismsDiffer>
    <experiments>5</experiments>
</comment>
<comment type="interaction">
    <interactant intactId="EBI-12284865">
        <id>Q9Y3A0</id>
    </interactant>
    <interactant intactId="EBI-5650739">
        <id>P43356</id>
        <label>MAGEA2B</label>
    </interactant>
    <organismsDiffer>false</organismsDiffer>
    <experiments>3</experiments>
</comment>
<comment type="subcellular location">
    <subcellularLocation>
        <location evidence="1 8">Mitochondrion inner membrane</location>
        <topology>Peripheral membrane protein</topology>
        <orientation>Matrix side</orientation>
    </subcellularLocation>
</comment>
<comment type="alternative products">
    <event type="alternative splicing"/>
    <isoform>
        <id>Q9Y3A0-1</id>
        <name>1</name>
        <sequence type="displayed"/>
    </isoform>
    <isoform>
        <id>Q9Y3A0-2</id>
        <name>2</name>
        <sequence type="described" ref="VSP_036866"/>
    </isoform>
</comment>
<comment type="tissue specificity">
    <text evidence="5">Expressed ubiquitously, but at high levels in liver, lung and pancreas.</text>
</comment>
<comment type="disease" evidence="6 7 9 10 11 12 13">
    <disease id="DI-04354">
        <name>Coenzyme Q10 deficiency, primary, 7</name>
        <acronym>COQ10D7</acronym>
        <description>An autosomal recessive disorder resulting from mitochondrial dysfunction and characterized by decreased levels of coenzyme Q10, and severe cardiac or neurologic symptoms soon after birth, usually resulting in death. Rarely, symptoms may have later onset.</description>
        <dbReference type="MIM" id="616276"/>
    </disease>
    <text>The disease is caused by variants affecting the gene represented in this entry.</text>
</comment>
<comment type="disease" evidence="9 13 14 15">
    <disease id="DI-06819">
        <name>Spastic ataxia 10, autosomal recessive</name>
        <acronym>SPAX10</acronym>
        <description>A form of spastic ataxia, a heterogeneous group of progressive neurodegenerative disorders characterized by lower-limb spasticity and generalized ataxia with dysarthria, impaired ocular movements, and gait disturbance. SPAX10 is a slowly progressive form with age at onset ranging from infancy to adulthood. Some patients show cerebellar atrophy on brain imaging.</description>
        <dbReference type="MIM" id="620666"/>
    </disease>
    <text>The disease is caused by variants affecting the gene represented in this entry.</text>
</comment>
<comment type="similarity">
    <text evidence="1">Belongs to the COQ4 family.</text>
</comment>
<comment type="caution">
    <text evidence="16 17">According to a report, COQ4 is also able to mediate C1-hydroxylation step during ubiquinone biosynthesis (PubMed:38295803). However, they do not exclude that this reaction could be performed by another enzyme, and experiments from anotehr study suggest that COQ6 could catalyze this step (PubMed:38425362).</text>
</comment>
<gene>
    <name evidence="1 20" type="primary">COQ4</name>
    <name type="ORF">CGI-92</name>
</gene>
<keyword id="KW-0025">Alternative splicing</keyword>
<keyword id="KW-0225">Disease variant</keyword>
<keyword id="KW-0456">Lyase</keyword>
<keyword id="KW-0472">Membrane</keyword>
<keyword id="KW-0496">Mitochondrion</keyword>
<keyword id="KW-0999">Mitochondrion inner membrane</keyword>
<keyword id="KW-0523">Neurodegeneration</keyword>
<keyword id="KW-0597">Phosphoprotein</keyword>
<keyword id="KW-1274">Primary mitochondrial disease</keyword>
<keyword id="KW-1267">Proteomics identification</keyword>
<keyword id="KW-1185">Reference proteome</keyword>
<keyword id="KW-0809">Transit peptide</keyword>
<keyword id="KW-0831">Ubiquinone biosynthesis</keyword>
<name>COQ4_HUMAN</name>
<protein>
    <recommendedName>
        <fullName evidence="1">Ubiquinone biosynthesis protein COQ4 homolog, mitochondrial</fullName>
    </recommendedName>
    <alternativeName>
        <fullName>4-hydroxy-3-methoxy-5-polyprenylbenzoate decarboxylase</fullName>
        <ecNumber evidence="16 22">4.1.1.130</ecNumber>
    </alternativeName>
    <alternativeName>
        <fullName evidence="1">Coenzyme Q biosynthesis protein 4 homolog</fullName>
    </alternativeName>
</protein>
<accession>Q9Y3A0</accession>
<accession>A8WBK8</accession>
<accession>B2R958</accession>
<accession>Q5T4B8</accession>
<accession>Q96EW4</accession>
<reference key="1">
    <citation type="journal article" date="2008" name="Biochem. Biophys. Res. Commun.">
        <title>Functional characterization of human COQ4, a gene required for coenzyme Q10 biosynthesis.</title>
        <authorList>
            <person name="Casarin A."/>
            <person name="Jimenez-Ortega J.C."/>
            <person name="Trevisson E."/>
            <person name="Pertegato V."/>
            <person name="Doimo M."/>
            <person name="Ferrero-Gomez M.L."/>
            <person name="Abbadi S."/>
            <person name="Artuch R."/>
            <person name="Quinzii C."/>
            <person name="Hirano M."/>
            <person name="Basso G."/>
            <person name="Ocana C.S."/>
            <person name="Navas P."/>
            <person name="Salviati L."/>
        </authorList>
    </citation>
    <scope>NUCLEOTIDE SEQUENCE [MRNA] (ISOFORMS 1 AND 2)</scope>
    <scope>SUBCELLULAR LOCATION</scope>
    <scope>TISSUE SPECIFICITY</scope>
    <scope>PATHWAY</scope>
</reference>
<reference key="2">
    <citation type="journal article" date="2000" name="Genome Res.">
        <title>Identification of novel human genes evolutionarily conserved in Caenorhabditis elegans by comparative proteomics.</title>
        <authorList>
            <person name="Lai C.-H."/>
            <person name="Chou C.-Y."/>
            <person name="Ch'ang L.-Y."/>
            <person name="Liu C.-S."/>
            <person name="Lin W.-C."/>
        </authorList>
    </citation>
    <scope>NUCLEOTIDE SEQUENCE [LARGE SCALE MRNA] (ISOFORM 1)</scope>
    <scope>VARIANT ALA-50</scope>
</reference>
<reference key="3">
    <citation type="journal article" date="2004" name="Nature">
        <title>DNA sequence and analysis of human chromosome 9.</title>
        <authorList>
            <person name="Humphray S.J."/>
            <person name="Oliver K."/>
            <person name="Hunt A.R."/>
            <person name="Plumb R.W."/>
            <person name="Loveland J.E."/>
            <person name="Howe K.L."/>
            <person name="Andrews T.D."/>
            <person name="Searle S."/>
            <person name="Hunt S.E."/>
            <person name="Scott C.E."/>
            <person name="Jones M.C."/>
            <person name="Ainscough R."/>
            <person name="Almeida J.P."/>
            <person name="Ambrose K.D."/>
            <person name="Ashwell R.I.S."/>
            <person name="Babbage A.K."/>
            <person name="Babbage S."/>
            <person name="Bagguley C.L."/>
            <person name="Bailey J."/>
            <person name="Banerjee R."/>
            <person name="Barker D.J."/>
            <person name="Barlow K.F."/>
            <person name="Bates K."/>
            <person name="Beasley H."/>
            <person name="Beasley O."/>
            <person name="Bird C.P."/>
            <person name="Bray-Allen S."/>
            <person name="Brown A.J."/>
            <person name="Brown J.Y."/>
            <person name="Burford D."/>
            <person name="Burrill W."/>
            <person name="Burton J."/>
            <person name="Carder C."/>
            <person name="Carter N.P."/>
            <person name="Chapman J.C."/>
            <person name="Chen Y."/>
            <person name="Clarke G."/>
            <person name="Clark S.Y."/>
            <person name="Clee C.M."/>
            <person name="Clegg S."/>
            <person name="Collier R.E."/>
            <person name="Corby N."/>
            <person name="Crosier M."/>
            <person name="Cummings A.T."/>
            <person name="Davies J."/>
            <person name="Dhami P."/>
            <person name="Dunn M."/>
            <person name="Dutta I."/>
            <person name="Dyer L.W."/>
            <person name="Earthrowl M.E."/>
            <person name="Faulkner L."/>
            <person name="Fleming C.J."/>
            <person name="Frankish A."/>
            <person name="Frankland J.A."/>
            <person name="French L."/>
            <person name="Fricker D.G."/>
            <person name="Garner P."/>
            <person name="Garnett J."/>
            <person name="Ghori J."/>
            <person name="Gilbert J.G.R."/>
            <person name="Glison C."/>
            <person name="Grafham D.V."/>
            <person name="Gribble S."/>
            <person name="Griffiths C."/>
            <person name="Griffiths-Jones S."/>
            <person name="Grocock R."/>
            <person name="Guy J."/>
            <person name="Hall R.E."/>
            <person name="Hammond S."/>
            <person name="Harley J.L."/>
            <person name="Harrison E.S.I."/>
            <person name="Hart E.A."/>
            <person name="Heath P.D."/>
            <person name="Henderson C.D."/>
            <person name="Hopkins B.L."/>
            <person name="Howard P.J."/>
            <person name="Howden P.J."/>
            <person name="Huckle E."/>
            <person name="Johnson C."/>
            <person name="Johnson D."/>
            <person name="Joy A.A."/>
            <person name="Kay M."/>
            <person name="Keenan S."/>
            <person name="Kershaw J.K."/>
            <person name="Kimberley A.M."/>
            <person name="King A."/>
            <person name="Knights A."/>
            <person name="Laird G.K."/>
            <person name="Langford C."/>
            <person name="Lawlor S."/>
            <person name="Leongamornlert D.A."/>
            <person name="Leversha M."/>
            <person name="Lloyd C."/>
            <person name="Lloyd D.M."/>
            <person name="Lovell J."/>
            <person name="Martin S."/>
            <person name="Mashreghi-Mohammadi M."/>
            <person name="Matthews L."/>
            <person name="McLaren S."/>
            <person name="McLay K.E."/>
            <person name="McMurray A."/>
            <person name="Milne S."/>
            <person name="Nickerson T."/>
            <person name="Nisbett J."/>
            <person name="Nordsiek G."/>
            <person name="Pearce A.V."/>
            <person name="Peck A.I."/>
            <person name="Porter K.M."/>
            <person name="Pandian R."/>
            <person name="Pelan S."/>
            <person name="Phillimore B."/>
            <person name="Povey S."/>
            <person name="Ramsey Y."/>
            <person name="Rand V."/>
            <person name="Scharfe M."/>
            <person name="Sehra H.K."/>
            <person name="Shownkeen R."/>
            <person name="Sims S.K."/>
            <person name="Skuce C.D."/>
            <person name="Smith M."/>
            <person name="Steward C.A."/>
            <person name="Swarbreck D."/>
            <person name="Sycamore N."/>
            <person name="Tester J."/>
            <person name="Thorpe A."/>
            <person name="Tracey A."/>
            <person name="Tromans A."/>
            <person name="Thomas D.W."/>
            <person name="Wall M."/>
            <person name="Wallis J.M."/>
            <person name="West A.P."/>
            <person name="Whitehead S.L."/>
            <person name="Willey D.L."/>
            <person name="Williams S.A."/>
            <person name="Wilming L."/>
            <person name="Wray P.W."/>
            <person name="Young L."/>
            <person name="Ashurst J.L."/>
            <person name="Coulson A."/>
            <person name="Blocker H."/>
            <person name="Durbin R.M."/>
            <person name="Sulston J.E."/>
            <person name="Hubbard T."/>
            <person name="Jackson M.J."/>
            <person name="Bentley D.R."/>
            <person name="Beck S."/>
            <person name="Rogers J."/>
            <person name="Dunham I."/>
        </authorList>
    </citation>
    <scope>NUCLEOTIDE SEQUENCE [LARGE SCALE GENOMIC DNA]</scope>
</reference>
<reference key="4">
    <citation type="journal article" date="2004" name="Nat. Genet.">
        <title>Complete sequencing and characterization of 21,243 full-length human cDNAs.</title>
        <authorList>
            <person name="Ota T."/>
            <person name="Suzuki Y."/>
            <person name="Nishikawa T."/>
            <person name="Otsuki T."/>
            <person name="Sugiyama T."/>
            <person name="Irie R."/>
            <person name="Wakamatsu A."/>
            <person name="Hayashi K."/>
            <person name="Sato H."/>
            <person name="Nagai K."/>
            <person name="Kimura K."/>
            <person name="Makita H."/>
            <person name="Sekine M."/>
            <person name="Obayashi M."/>
            <person name="Nishi T."/>
            <person name="Shibahara T."/>
            <person name="Tanaka T."/>
            <person name="Ishii S."/>
            <person name="Yamamoto J."/>
            <person name="Saito K."/>
            <person name="Kawai Y."/>
            <person name="Isono Y."/>
            <person name="Nakamura Y."/>
            <person name="Nagahari K."/>
            <person name="Murakami K."/>
            <person name="Yasuda T."/>
            <person name="Iwayanagi T."/>
            <person name="Wagatsuma M."/>
            <person name="Shiratori A."/>
            <person name="Sudo H."/>
            <person name="Hosoiri T."/>
            <person name="Kaku Y."/>
            <person name="Kodaira H."/>
            <person name="Kondo H."/>
            <person name="Sugawara M."/>
            <person name="Takahashi M."/>
            <person name="Kanda K."/>
            <person name="Yokoi T."/>
            <person name="Furuya T."/>
            <person name="Kikkawa E."/>
            <person name="Omura Y."/>
            <person name="Abe K."/>
            <person name="Kamihara K."/>
            <person name="Katsuta N."/>
            <person name="Sato K."/>
            <person name="Tanikawa M."/>
            <person name="Yamazaki M."/>
            <person name="Ninomiya K."/>
            <person name="Ishibashi T."/>
            <person name="Yamashita H."/>
            <person name="Murakawa K."/>
            <person name="Fujimori K."/>
            <person name="Tanai H."/>
            <person name="Kimata M."/>
            <person name="Watanabe M."/>
            <person name="Hiraoka S."/>
            <person name="Chiba Y."/>
            <person name="Ishida S."/>
            <person name="Ono Y."/>
            <person name="Takiguchi S."/>
            <person name="Watanabe S."/>
            <person name="Yosida M."/>
            <person name="Hotuta T."/>
            <person name="Kusano J."/>
            <person name="Kanehori K."/>
            <person name="Takahashi-Fujii A."/>
            <person name="Hara H."/>
            <person name="Tanase T.-O."/>
            <person name="Nomura Y."/>
            <person name="Togiya S."/>
            <person name="Komai F."/>
            <person name="Hara R."/>
            <person name="Takeuchi K."/>
            <person name="Arita M."/>
            <person name="Imose N."/>
            <person name="Musashino K."/>
            <person name="Yuuki H."/>
            <person name="Oshima A."/>
            <person name="Sasaki N."/>
            <person name="Aotsuka S."/>
            <person name="Yoshikawa Y."/>
            <person name="Matsunawa H."/>
            <person name="Ichihara T."/>
            <person name="Shiohata N."/>
            <person name="Sano S."/>
            <person name="Moriya S."/>
            <person name="Momiyama H."/>
            <person name="Satoh N."/>
            <person name="Takami S."/>
            <person name="Terashima Y."/>
            <person name="Suzuki O."/>
            <person name="Nakagawa S."/>
            <person name="Senoh A."/>
            <person name="Mizoguchi H."/>
            <person name="Goto Y."/>
            <person name="Shimizu F."/>
            <person name="Wakebe H."/>
            <person name="Hishigaki H."/>
            <person name="Watanabe T."/>
            <person name="Sugiyama A."/>
            <person name="Takemoto M."/>
            <person name="Kawakami B."/>
            <person name="Yamazaki M."/>
            <person name="Watanabe K."/>
            <person name="Kumagai A."/>
            <person name="Itakura S."/>
            <person name="Fukuzumi Y."/>
            <person name="Fujimori Y."/>
            <person name="Komiyama M."/>
            <person name="Tashiro H."/>
            <person name="Tanigami A."/>
            <person name="Fujiwara T."/>
            <person name="Ono T."/>
            <person name="Yamada K."/>
            <person name="Fujii Y."/>
            <person name="Ozaki K."/>
            <person name="Hirao M."/>
            <person name="Ohmori Y."/>
            <person name="Kawabata A."/>
            <person name="Hikiji T."/>
            <person name="Kobatake N."/>
            <person name="Inagaki H."/>
            <person name="Ikema Y."/>
            <person name="Okamoto S."/>
            <person name="Okitani R."/>
            <person name="Kawakami T."/>
            <person name="Noguchi S."/>
            <person name="Itoh T."/>
            <person name="Shigeta K."/>
            <person name="Senba T."/>
            <person name="Matsumura K."/>
            <person name="Nakajima Y."/>
            <person name="Mizuno T."/>
            <person name="Morinaga M."/>
            <person name="Sasaki M."/>
            <person name="Togashi T."/>
            <person name="Oyama M."/>
            <person name="Hata H."/>
            <person name="Watanabe M."/>
            <person name="Komatsu T."/>
            <person name="Mizushima-Sugano J."/>
            <person name="Satoh T."/>
            <person name="Shirai Y."/>
            <person name="Takahashi Y."/>
            <person name="Nakagawa K."/>
            <person name="Okumura K."/>
            <person name="Nagase T."/>
            <person name="Nomura N."/>
            <person name="Kikuchi H."/>
            <person name="Masuho Y."/>
            <person name="Yamashita R."/>
            <person name="Nakai K."/>
            <person name="Yada T."/>
            <person name="Nakamura Y."/>
            <person name="Ohara O."/>
            <person name="Isogai T."/>
            <person name="Sugano S."/>
        </authorList>
    </citation>
    <scope>NUCLEOTIDE SEQUENCE [LARGE SCALE MRNA] (ISOFORM 1)</scope>
    <scope>VARIANT ALA-50</scope>
</reference>
<reference key="5">
    <citation type="submission" date="2005-07" db="EMBL/GenBank/DDBJ databases">
        <authorList>
            <person name="Mural R.J."/>
            <person name="Istrail S."/>
            <person name="Sutton G.G."/>
            <person name="Florea L."/>
            <person name="Halpern A.L."/>
            <person name="Mobarry C.M."/>
            <person name="Lippert R."/>
            <person name="Walenz B."/>
            <person name="Shatkay H."/>
            <person name="Dew I."/>
            <person name="Miller J.R."/>
            <person name="Flanigan M.J."/>
            <person name="Edwards N.J."/>
            <person name="Bolanos R."/>
            <person name="Fasulo D."/>
            <person name="Halldorsson B.V."/>
            <person name="Hannenhalli S."/>
            <person name="Turner R."/>
            <person name="Yooseph S."/>
            <person name="Lu F."/>
            <person name="Nusskern D.R."/>
            <person name="Shue B.C."/>
            <person name="Zheng X.H."/>
            <person name="Zhong F."/>
            <person name="Delcher A.L."/>
            <person name="Huson D.H."/>
            <person name="Kravitz S.A."/>
            <person name="Mouchard L."/>
            <person name="Reinert K."/>
            <person name="Remington K.A."/>
            <person name="Clark A.G."/>
            <person name="Waterman M.S."/>
            <person name="Eichler E.E."/>
            <person name="Adams M.D."/>
            <person name="Hunkapiller M.W."/>
            <person name="Myers E.W."/>
            <person name="Venter J.C."/>
        </authorList>
    </citation>
    <scope>NUCLEOTIDE SEQUENCE [LARGE SCALE GENOMIC DNA]</scope>
    <scope>VARIANT ALA-50</scope>
</reference>
<reference key="6">
    <citation type="journal article" date="2004" name="Genome Res.">
        <title>The status, quality, and expansion of the NIH full-length cDNA project: the Mammalian Gene Collection (MGC).</title>
        <authorList>
            <consortium name="The MGC Project Team"/>
        </authorList>
    </citation>
    <scope>NUCLEOTIDE SEQUENCE [LARGE SCALE MRNA] (ISOFORM 1)</scope>
    <scope>VARIANT ALA-50</scope>
    <source>
        <tissue>Lung</tissue>
    </source>
</reference>
<reference key="7">
    <citation type="journal article" date="2013" name="J. Proteome Res.">
        <title>Toward a comprehensive characterization of a human cancer cell phosphoproteome.</title>
        <authorList>
            <person name="Zhou H."/>
            <person name="Di Palma S."/>
            <person name="Preisinger C."/>
            <person name="Peng M."/>
            <person name="Polat A.N."/>
            <person name="Heck A.J."/>
            <person name="Mohammed S."/>
        </authorList>
    </citation>
    <scope>PHOSPHORYLATION [LARGE SCALE ANALYSIS] AT SER-108</scope>
    <scope>IDENTIFICATION BY MASS SPECTROMETRY [LARGE SCALE ANALYSIS]</scope>
    <source>
        <tissue>Erythroleukemia</tissue>
    </source>
</reference>
<reference key="8">
    <citation type="journal article" date="2016" name="Mol. Cell">
        <title>Mitochondrial protein interaction mapping identifies regulators of respiratory chain function.</title>
        <authorList>
            <person name="Floyd B.J."/>
            <person name="Wilkerson E.M."/>
            <person name="Veling M.T."/>
            <person name="Minogue C.E."/>
            <person name="Xia C."/>
            <person name="Beebe E.T."/>
            <person name="Wrobel R.L."/>
            <person name="Cho H."/>
            <person name="Kremer L.S."/>
            <person name="Alston C.L."/>
            <person name="Gromek K.A."/>
            <person name="Dolan B.K."/>
            <person name="Ulbrich A."/>
            <person name="Stefely J.A."/>
            <person name="Bohl S.L."/>
            <person name="Werner K.M."/>
            <person name="Jochem A."/>
            <person name="Westphall M.S."/>
            <person name="Rensvold J.W."/>
            <person name="Taylor R.W."/>
            <person name="Prokisch H."/>
            <person name="Kim J.J."/>
            <person name="Coon J.J."/>
            <person name="Pagliarini D.J."/>
        </authorList>
    </citation>
    <scope>SUBCELLULAR LOCATION</scope>
    <scope>IDENTIFICATION IN THE COQ ENZYME COMPLEX</scope>
</reference>
<reference key="9">
    <citation type="journal article" date="2024" name="Mol. Cell">
        <title>COQ4 is required for the oxidative decarboxylation of the C1 carbon of coenzyme Q in eukaryotic cells.</title>
        <authorList>
            <person name="Pelosi L."/>
            <person name="Morbiato L."/>
            <person name="Burgardt A."/>
            <person name="Tonello F."/>
            <person name="Bartlett A.K."/>
            <person name="Guerra R.M."/>
            <person name="Ferizhendi K.K."/>
            <person name="Desbats M.A."/>
            <person name="Rascalou B."/>
            <person name="Marchi M."/>
            <person name="Vazquez-Fonseca L."/>
            <person name="Agosto C."/>
            <person name="Zanotti G."/>
            <person name="Roger-Margueritat M."/>
            <person name="Alcazar-Fabra M."/>
            <person name="Garcia-Corzo L."/>
            <person name="Sanchez-Cuesta A."/>
            <person name="Navas P."/>
            <person name="Brea-Calvo G."/>
            <person name="Trevisson E."/>
            <person name="Wendisch V.F."/>
            <person name="Pagliarini D.J."/>
            <person name="Salviati L."/>
            <person name="Pierrel F."/>
        </authorList>
    </citation>
    <scope>FUNCTION</scope>
    <scope>CATALYTIC ACTIVITY</scope>
    <scope>PATHWAY</scope>
    <scope>COFACTOR</scope>
    <scope>MUTAGENESIS OF 163-HIS--HIS-167 AND ASP-164</scope>
</reference>
<reference key="10">
    <citation type="journal article" date="2024" name="Nat. Catal.">
        <title>In vitro construction of the COQ metabolon unveils the molecular determinants of coenzyme Q biosynthesis.</title>
        <authorList>
            <person name="Nicoll C.R."/>
            <person name="Alvigini L."/>
            <person name="Gottinger A."/>
            <person name="Cecchini D."/>
            <person name="Mannucci B."/>
            <person name="Corana F."/>
            <person name="Mascotti M.L."/>
            <person name="Mattevi A."/>
        </authorList>
    </citation>
    <scope>FUNCTION</scope>
    <scope>CATALYTIC ACTIVITY</scope>
    <scope>PATHWAY</scope>
    <scope>COFACTOR</scope>
</reference>
<reference key="11">
    <citation type="journal article" date="2015" name="Am. J. Hum. Genet.">
        <title>COQ4 mutations cause a broad spectrum of mitochondrial disorders associated with CoQ10 deficiency.</title>
        <authorList>
            <person name="Brea-Calvo G."/>
            <person name="Haack T.B."/>
            <person name="Karall D."/>
            <person name="Ohtake A."/>
            <person name="Invernizzi F."/>
            <person name="Carrozzo R."/>
            <person name="Kremer L."/>
            <person name="Dusi S."/>
            <person name="Fauth C."/>
            <person name="Scholl-Burgi S."/>
            <person name="Graf E."/>
            <person name="Ahting U."/>
            <person name="Resta N."/>
            <person name="Laforgia N."/>
            <person name="Verrigni D."/>
            <person name="Okazaki Y."/>
            <person name="Kohda M."/>
            <person name="Martinelli D."/>
            <person name="Freisinger P."/>
            <person name="Strom T.M."/>
            <person name="Meitinger T."/>
            <person name="Lamperti C."/>
            <person name="Lacson A."/>
            <person name="Navas P."/>
            <person name="Mayr J.A."/>
            <person name="Bertini E."/>
            <person name="Murayama K."/>
            <person name="Zeviani M."/>
            <person name="Prokisch H."/>
            <person name="Ghezzi D."/>
        </authorList>
    </citation>
    <scope>INVOLVEMENT IN COQ10D7</scope>
    <scope>VARIANTS COQ10D7 SER-52; SER-64; 141-ARG--ALA-265 DEL; GLY-145; THR-174 DEL AND CYS-240</scope>
</reference>
<reference key="12">
    <citation type="journal article" date="2016" name="PLoS Genet.">
        <title>A comprehensive genomic analysis reveals the genetic landscape of mitochondrial respiratory chain complex deficiencies.</title>
        <authorList>
            <person name="Kohda M."/>
            <person name="Tokuzawa Y."/>
            <person name="Kishita Y."/>
            <person name="Nyuzuki H."/>
            <person name="Moriyama Y."/>
            <person name="Mizuno Y."/>
            <person name="Hirata T."/>
            <person name="Yatsuka Y."/>
            <person name="Yamashita-Sugahara Y."/>
            <person name="Nakachi Y."/>
            <person name="Kato H."/>
            <person name="Okuda A."/>
            <person name="Tamaru S."/>
            <person name="Borna N.N."/>
            <person name="Banshoya K."/>
            <person name="Aigaki T."/>
            <person name="Sato-Miyata Y."/>
            <person name="Ohnuma K."/>
            <person name="Suzuki T."/>
            <person name="Nagao A."/>
            <person name="Maehata H."/>
            <person name="Matsuda F."/>
            <person name="Higasa K."/>
            <person name="Nagasaki M."/>
            <person name="Yasuda J."/>
            <person name="Yamamoto M."/>
            <person name="Fushimi T."/>
            <person name="Shimura M."/>
            <person name="Kaiho-Ichimoto K."/>
            <person name="Harashima H."/>
            <person name="Yamazaki T."/>
            <person name="Mori M."/>
            <person name="Murayama K."/>
            <person name="Ohtake A."/>
            <person name="Okazaki Y."/>
        </authorList>
    </citation>
    <scope>VARIANT COQ10D7 CYS-240</scope>
</reference>
<reference key="13">
    <citation type="journal article" date="2019" name="J. Hum. Genet.">
        <title>Clinical phenotype, in silico and biomedical analyses, and intervention for an East Asian population-specific c.370G&gt;A (p.G124S) COQ4 mutation in a Chinese family with CoQ10 deficiency-associated Leigh syndrome.</title>
        <authorList>
            <person name="Lu M."/>
            <person name="Zhou Y."/>
            <person name="Wang Z."/>
            <person name="Xia Z."/>
            <person name="Ren J."/>
            <person name="Guo Q."/>
        </authorList>
    </citation>
    <scope>VARIANT COQ10D7 SER-124</scope>
    <scope>PATHWAY</scope>
</reference>
<reference key="14">
    <citation type="journal article" date="2019" name="NPJ Genom. Med.">
        <title>Primary coenzyme Q10 deficiency-7: expanded phenotypic spectrum and a founder mutation in southern Chinese.</title>
        <authorList>
            <person name="Yu M.H."/>
            <person name="Tsang M.H."/>
            <person name="Lai S."/>
            <person name="Ho M.S."/>
            <person name="Tse D.M.L."/>
            <person name="Willis B."/>
            <person name="Kwong A.K."/>
            <person name="Chou Y.Y."/>
            <person name="Lin S.P."/>
            <person name="Quinzii C.M."/>
            <person name="Hwu W.L."/>
            <person name="Chien Y.H."/>
            <person name="Kuo P.L."/>
            <person name="Chan V.C."/>
            <person name="Tsoi C."/>
            <person name="Chong S.C."/>
            <person name="Rodenburg R.J.T."/>
            <person name="Smeitink J."/>
            <person name="Mak C.C."/>
            <person name="Yeung K.S."/>
            <person name="Fung J.L."/>
            <person name="Lam W."/>
            <person name="Hui J."/>
            <person name="Lee N.C."/>
            <person name="Fung C.W."/>
            <person name="Chung B.H."/>
        </authorList>
    </citation>
    <scope>VARIANTS COQ10D7 SER-124; VAL-124 AND ARG-184</scope>
</reference>
<reference key="15">
    <citation type="journal article" date="2021" name="Am. J. Med. Genet. A">
        <title>Clinical spectrum in multiple families with primary COQ10 deficiency.</title>
        <authorList>
            <person name="Hashemi S.S."/>
            <person name="Zare-Abdollahi D."/>
            <person name="Bakhshandeh M.K."/>
            <person name="Vafaee A."/>
            <person name="Abolhasani S."/>
            <person name="Inanloo Rahatloo K."/>
            <person name="DanaeeFard F."/>
            <person name="Farboodi N."/>
            <person name="Rohani M."/>
            <person name="Alavi A."/>
        </authorList>
    </citation>
    <scope>VARIANT COQ10D7 CYS-146</scope>
</reference>
<reference key="16">
    <citation type="journal article" date="2021" name="J. Neurol.">
        <title>New pathogenic variants in COQ4 cause ataxia and neurodevelopmental disorder without detectable CoQ10 deficiency in muscle or skin fibroblasts.</title>
        <authorList>
            <person name="Mero S."/>
            <person name="Salviati L."/>
            <person name="Leuzzi V."/>
            <person name="Rubegni A."/>
            <person name="Calderan C."/>
            <person name="Nardecchia F."/>
            <person name="Galatolo D."/>
            <person name="Desbats M.A."/>
            <person name="Naef V."/>
            <person name="Gemignani F."/>
            <person name="Novelli M."/>
            <person name="Tessa A."/>
            <person name="Battini R."/>
            <person name="Santorelli F.M."/>
            <person name="Marchese M."/>
        </authorList>
    </citation>
    <scope>VARIANTS COQ10D7 ASP-95; HIS-102; SER-193 AND CYS-240</scope>
    <scope>CHARACTERIZATION OF COQ10D7 ASP-95; HIS-102; SER-193 AND CYS-240</scope>
</reference>
<reference key="17">
    <citation type="journal article" date="2022" name="Mov. Disord.">
        <title>Bi-allelic COQ4 variants cause adult-onset ataxia-spasticity spectrum disease.</title>
        <authorList>
            <person name="Cordts I."/>
            <person name="Semmler L."/>
            <person name="Prasuhn J."/>
            <person name="Seibt A."/>
            <person name="Herebian D."/>
            <person name="Navaratnarajah T."/>
            <person name="Park J."/>
            <person name="Deininger N."/>
            <person name="Laugwitz L."/>
            <person name="Goericke S.L."/>
            <person name="Lingor P."/>
            <person name="Brueggemann N."/>
            <person name="Muenchau A."/>
            <person name="Synofzik M."/>
            <person name="Timmann D."/>
            <person name="Mayr J.A."/>
            <person name="Haack T.B."/>
            <person name="Distelmaier F."/>
            <person name="Deschauer M."/>
        </authorList>
    </citation>
    <scope>VARIANTS SPAX10 HIS-102; LYS-126; HIS-145; CYS-146 AND GLN-158</scope>
    <scope>VARIANT COQ10D7 GLY-145</scope>
    <scope>INVOLVEMENT IN SPAX10</scope>
</reference>
<reference key="18">
    <citation type="journal article" date="2023" name="CNS Neurosci. Ther.">
        <title>Biallelic variants in the COQ4 gene caused hereditary spastic paraplegia predominant phenotype.</title>
        <authorList>
            <person name="Wei Q."/>
            <person name="Yu H."/>
            <person name="Wang P.S."/>
            <person name="Xie J.J."/>
            <person name="Dong H.L."/>
            <person name="Wu Z.Y."/>
            <person name="Li H.F."/>
        </authorList>
    </citation>
    <scope>VARIANTS SPAX10 CYS-102; HIS-102; CYS-145 AND GLU-178</scope>
</reference>
<reference key="19">
    <citation type="journal article" date="2024" name="Mov. Disord.">
        <title>Biallelic COQ4 Variants in Hereditary Spastic Paraplegia: Clinical and Molecular Characterization.</title>
        <authorList>
            <person name="Lin X."/>
            <person name="Jiang J.Y."/>
            <person name="Hong D.J."/>
            <person name="Lin K.J."/>
            <person name="Li J.J."/>
            <person name="Chen Y.J."/>
            <person name="Qiu Y.S."/>
            <person name="Wang Z."/>
            <person name="Liao Y.C."/>
            <person name="Yang K."/>
            <person name="Shi Y."/>
            <person name="Wang M.W."/>
            <person name="Hsu S.L."/>
            <person name="Hong S."/>
            <person name="Zeng Y.H."/>
            <person name="Chen X.C."/>
            <person name="Wang N."/>
            <person name="Lee Y.C."/>
            <person name="Chen W.J."/>
        </authorList>
    </citation>
    <scope>VARIANTS SPAX10 SER-124; HIS-145; ARG-184; HIS-240 AND TRP-249</scope>
    <scope>CHARACTERIZATION OF VARIANT SPAX10 HIS-240</scope>
    <scope>ALTERNATIVE SPLICING</scope>
</reference>
<proteinExistence type="evidence at protein level"/>
<feature type="transit peptide" description="Mitochondrion" evidence="1">
    <location>
        <begin position="1"/>
        <end position="30"/>
    </location>
</feature>
<feature type="chain" id="PRO_0000115240" description="Ubiquinone biosynthesis protein COQ4 homolog, mitochondrial">
    <location>
        <begin position="31"/>
        <end position="265"/>
    </location>
</feature>
<feature type="binding site" evidence="1 16 17">
    <location>
        <position position="163"/>
    </location>
    <ligand>
        <name>Zn(2+)</name>
        <dbReference type="ChEBI" id="CHEBI:29105"/>
    </ligand>
</feature>
<feature type="binding site" evidence="1 16 17">
    <location>
        <position position="164"/>
    </location>
    <ligand>
        <name>Zn(2+)</name>
        <dbReference type="ChEBI" id="CHEBI:29105"/>
    </ligand>
</feature>
<feature type="binding site" evidence="1 16 17">
    <location>
        <position position="167"/>
    </location>
    <ligand>
        <name>Zn(2+)</name>
        <dbReference type="ChEBI" id="CHEBI:29105"/>
    </ligand>
</feature>
<feature type="binding site" evidence="1 16 17">
    <location>
        <position position="179"/>
    </location>
    <ligand>
        <name>Zn(2+)</name>
        <dbReference type="ChEBI" id="CHEBI:29105"/>
    </ligand>
</feature>
<feature type="modified residue" description="Phosphoserine" evidence="23">
    <location>
        <position position="108"/>
    </location>
</feature>
<feature type="splice variant" id="VSP_036866" description="In isoform 2." evidence="19">
    <location>
        <begin position="1"/>
        <end position="24"/>
    </location>
</feature>
<feature type="sequence variant" id="VAR_048829" description="In dbSNP:rs9697215.">
    <original>R</original>
    <variation>Q</variation>
    <location>
        <position position="20"/>
    </location>
</feature>
<feature type="sequence variant" id="VAR_054861" description="In dbSNP:rs3003601." evidence="2 3 4 18">
    <original>G</original>
    <variation>A</variation>
    <location>
        <position position="50"/>
    </location>
</feature>
<feature type="sequence variant" id="VAR_073356" description="In COQ10D7; dbSNP:rs786204770." evidence="6">
    <original>L</original>
    <variation>S</variation>
    <location>
        <position position="52"/>
    </location>
</feature>
<feature type="sequence variant" id="VAR_073357" description="In COQ10D7; dbSNP:rs766317663." evidence="6">
    <original>P</original>
    <variation>S</variation>
    <location>
        <position position="64"/>
    </location>
</feature>
<feature type="sequence variant" id="VAR_089273" description="In COQ10D7; uncertain significance; does not support cell growth in a yeast complementation assay suggesting loss of function; dbSNP:rs779568890." evidence="12">
    <original>G</original>
    <variation>D</variation>
    <location>
        <position position="95"/>
    </location>
</feature>
<feature type="sequence variant" id="VAR_089274" description="In SPAX10; uncertain significance; dbSNP:rs371984550." evidence="14">
    <original>R</original>
    <variation>C</variation>
    <location>
        <position position="102"/>
    </location>
</feature>
<feature type="sequence variant" id="VAR_089275" description="In COQ10D7 and SPAX10; likely pathogenic; poorly supports cell growth in a yeast complementation assay suggesting loss of function; dbSNP:rs929713295." evidence="12 13 14">
    <original>R</original>
    <variation>H</variation>
    <location>
        <position position="102"/>
    </location>
</feature>
<feature type="sequence variant" id="VAR_089276" description="In COQ10D7 and SPAX10; likely pathogenic; dbSNP:rs776825296." evidence="9 10 15">
    <original>G</original>
    <variation>S</variation>
    <location>
        <position position="124"/>
    </location>
</feature>
<feature type="sequence variant" id="VAR_089277" description="In COQ10D7; likely pathogenic; dbSNP:rs1412692974." evidence="10">
    <original>G</original>
    <variation>V</variation>
    <location>
        <position position="124"/>
    </location>
</feature>
<feature type="sequence variant" id="VAR_089278" description="In SPAX10; uncertain significance; dbSNP:rs149398860." evidence="13">
    <original>E</original>
    <variation>K</variation>
    <location>
        <position position="126"/>
    </location>
</feature>
<feature type="sequence variant" id="VAR_089279" description="In COQ10D7; likely pathogenic." evidence="6">
    <location>
        <begin position="141"/>
        <end position="265"/>
    </location>
</feature>
<feature type="sequence variant" id="VAR_089280" description="In SPAX10; likely pathogenic; dbSNP:rs774395996." evidence="14">
    <original>R</original>
    <variation>C</variation>
    <location>
        <position position="145"/>
    </location>
</feature>
<feature type="sequence variant" id="VAR_073358" description="In COQ10D7; dbSNP:rs774395996." evidence="6 13">
    <original>R</original>
    <variation>G</variation>
    <location>
        <position position="145"/>
    </location>
</feature>
<feature type="sequence variant" id="VAR_089281" description="In SPAX10; likely pathogenic; dbSNP:rs762170679." evidence="13 15">
    <original>R</original>
    <variation>H</variation>
    <location>
        <position position="145"/>
    </location>
</feature>
<feature type="sequence variant" id="VAR_089031" description="In COQ10D7 and SPAX10; likely pathogenic; dbSNP:rs1163170578." evidence="11 13">
    <original>F</original>
    <variation>C</variation>
    <location>
        <position position="146"/>
    </location>
</feature>
<feature type="sequence variant" id="VAR_089282" description="In SPAX10; likely pathogenic; dbSNP:rs779805523." evidence="13">
    <original>R</original>
    <variation>Q</variation>
    <location>
        <position position="158"/>
    </location>
</feature>
<feature type="sequence variant" id="VAR_073359" description="In COQ10D7." evidence="6">
    <location>
        <position position="174"/>
    </location>
</feature>
<feature type="sequence variant" id="VAR_089283" description="In SPAX10; uncertain significance; dbSNP:rs754865584." evidence="14">
    <original>G</original>
    <variation>E</variation>
    <location>
        <position position="178"/>
    </location>
</feature>
<feature type="sequence variant" id="VAR_089284" description="In SPAX10 and COQ10D7; likely pathogenic; dbSNP:rs2131235893." evidence="10 15">
    <original>W</original>
    <variation>R</variation>
    <location>
        <position position="184"/>
    </location>
</feature>
<feature type="sequence variant" id="VAR_089285" description="In COQ10D7; likely pathogenic; does not support cell growth in a yeast complementation assay suggesting loss of function; dbSNP:rs568200779." evidence="12">
    <original>P</original>
    <variation>S</variation>
    <location>
        <position position="193"/>
    </location>
</feature>
<feature type="sequence variant" id="VAR_073360" description="In COQ10D7; likely pathogenic; does not support cell growth in a yeast complementation assay suggesting loss of function; dbSNP:rs143441644." evidence="6 7 12">
    <original>R</original>
    <variation>C</variation>
    <location>
        <position position="240"/>
    </location>
</feature>
<feature type="sequence variant" id="VAR_089286" description="In SPAX10; likely pathogenic; affects ubiquinone synthesis resulting in decreased ubiquinone levels in transfected cells." evidence="15">
    <original>R</original>
    <variation>H</variation>
    <location>
        <position position="240"/>
    </location>
</feature>
<feature type="sequence variant" id="VAR_089287" description="In SPAX10; uncertain significance; dbSNP:rs1832451455." evidence="15">
    <original>R</original>
    <variation>W</variation>
    <location>
        <position position="249"/>
    </location>
</feature>
<feature type="mutagenesis site" description="Abolished zinc-binding." evidence="16">
    <original>HDMLH</original>
    <variation>ADMLA</variation>
    <location>
        <begin position="163"/>
        <end position="167"/>
    </location>
</feature>
<feature type="mutagenesis site" description="Abolished zinc-binding; when associated with A-179. Abolished zinc-binding and ability to promote formation of ubiquinone." evidence="16">
    <original>D</original>
    <variation>A</variation>
    <location>
        <position position="164"/>
    </location>
</feature>
<feature type="sequence conflict" description="In Ref. 2; AAD34087." evidence="21" ref="2">
    <original>P</original>
    <variation>H</variation>
    <location>
        <position position="230"/>
    </location>
</feature>
<sequence>MATLLRPVLRRLCGLPGLQRPAAEMPLRARSDGAGPLYSHHLPTSPLQKGLLAAGSAAMALYNPYRHDMVAVLGETTGHRTLKVLRDQMRRDPEGAQILQERPRISTSTLDLGKLQSLPEGSLGREYLRFLDVNRVSPDTRAPTRFVDDEELAYVIQRYREVHDMLHTLLGMPTNILGEIVVKWFEAVQTGLPMCILGAFFGPIRLGAQSLQVLVSELIPWAVQNGRRAPCVLNLYYERRWEQSLRALREELGITAPPMHVQGLA</sequence>